<dbReference type="EMBL" id="AF115509">
    <property type="protein sequence ID" value="AAD41257.1"/>
    <property type="molecule type" value="mRNA"/>
</dbReference>
<dbReference type="EMBL" id="AK000255">
    <property type="protein sequence ID" value="BAA91035.1"/>
    <property type="molecule type" value="mRNA"/>
</dbReference>
<dbReference type="EMBL" id="AK291514">
    <property type="protein sequence ID" value="BAF84203.1"/>
    <property type="molecule type" value="mRNA"/>
</dbReference>
<dbReference type="EMBL" id="AK302282">
    <property type="protein sequence ID" value="BAG63625.1"/>
    <property type="molecule type" value="mRNA"/>
</dbReference>
<dbReference type="EMBL" id="CR749705">
    <property type="protein sequence ID" value="CAH18481.1"/>
    <property type="molecule type" value="mRNA"/>
</dbReference>
<dbReference type="EMBL" id="AC006583">
    <property type="status" value="NOT_ANNOTATED_CDS"/>
    <property type="molecule type" value="Genomic_DNA"/>
</dbReference>
<dbReference type="EMBL" id="AC126118">
    <property type="status" value="NOT_ANNOTATED_CDS"/>
    <property type="molecule type" value="Genomic_DNA"/>
</dbReference>
<dbReference type="EMBL" id="BC053668">
    <property type="protein sequence ID" value="AAH53668.1"/>
    <property type="molecule type" value="mRNA"/>
</dbReference>
<dbReference type="CCDS" id="CCDS2664.1">
    <molecule id="Q9Y608-1"/>
</dbReference>
<dbReference type="CCDS" id="CCDS2665.1">
    <molecule id="Q9Y608-2"/>
</dbReference>
<dbReference type="CCDS" id="CCDS46791.1">
    <molecule id="Q9Y608-4"/>
</dbReference>
<dbReference type="CCDS" id="CCDS63592.1">
    <molecule id="Q9Y608-5"/>
</dbReference>
<dbReference type="PIR" id="T50611">
    <property type="entry name" value="T50611"/>
</dbReference>
<dbReference type="RefSeq" id="NP_001127841.1">
    <molecule id="Q9Y608-4"/>
    <property type="nucleotide sequence ID" value="NM_001134369.2"/>
</dbReference>
<dbReference type="RefSeq" id="NP_001269620.1">
    <molecule id="Q9Y608-5"/>
    <property type="nucleotide sequence ID" value="NM_001282691.1"/>
</dbReference>
<dbReference type="RefSeq" id="NP_001335239.1">
    <molecule id="Q9Y608-4"/>
    <property type="nucleotide sequence ID" value="NM_001348310.1"/>
</dbReference>
<dbReference type="RefSeq" id="NP_001335240.1">
    <molecule id="Q9Y608-2"/>
    <property type="nucleotide sequence ID" value="NM_001348311.1"/>
</dbReference>
<dbReference type="RefSeq" id="NP_006300.1">
    <molecule id="Q9Y608-1"/>
    <property type="nucleotide sequence ID" value="NM_006309.4"/>
</dbReference>
<dbReference type="RefSeq" id="NP_060194.1">
    <molecule id="Q9Y608-2"/>
    <property type="nucleotide sequence ID" value="NM_017724.2"/>
</dbReference>
<dbReference type="RefSeq" id="XP_005265596.1">
    <molecule id="Q9Y608-1"/>
    <property type="nucleotide sequence ID" value="XM_005265539.3"/>
</dbReference>
<dbReference type="RefSeq" id="XP_005265597.1">
    <molecule id="Q9Y608-1"/>
    <property type="nucleotide sequence ID" value="XM_005265540.2"/>
</dbReference>
<dbReference type="RefSeq" id="XP_011532519.1">
    <molecule id="Q9Y608-1"/>
    <property type="nucleotide sequence ID" value="XM_011534217.2"/>
</dbReference>
<dbReference type="RefSeq" id="XP_011532520.1">
    <molecule id="Q9Y608-1"/>
    <property type="nucleotide sequence ID" value="XM_011534218.2"/>
</dbReference>
<dbReference type="RefSeq" id="XP_011532521.1">
    <molecule id="Q9Y608-1"/>
    <property type="nucleotide sequence ID" value="XM_011534219.2"/>
</dbReference>
<dbReference type="RefSeq" id="XP_016862973.1">
    <property type="nucleotide sequence ID" value="XM_017007484.1"/>
</dbReference>
<dbReference type="RefSeq" id="XP_047305157.1">
    <molecule id="Q9Y608-1"/>
    <property type="nucleotide sequence ID" value="XM_047449201.1"/>
</dbReference>
<dbReference type="SMR" id="Q9Y608"/>
<dbReference type="BioGRID" id="114643">
    <property type="interactions" value="151"/>
</dbReference>
<dbReference type="FunCoup" id="Q9Y608">
    <property type="interactions" value="640"/>
</dbReference>
<dbReference type="IntAct" id="Q9Y608">
    <property type="interactions" value="74"/>
</dbReference>
<dbReference type="MINT" id="Q9Y608"/>
<dbReference type="STRING" id="9606.ENSP00000338727"/>
<dbReference type="GlyGen" id="Q9Y608">
    <property type="glycosylation" value="2 sites, 1 N-linked glycan (1 site), 1 O-linked glycan (1 site)"/>
</dbReference>
<dbReference type="iPTMnet" id="Q9Y608"/>
<dbReference type="MetOSite" id="Q9Y608"/>
<dbReference type="PhosphoSitePlus" id="Q9Y608"/>
<dbReference type="BioMuta" id="LRRFIP2"/>
<dbReference type="DMDM" id="74721508"/>
<dbReference type="jPOST" id="Q9Y608"/>
<dbReference type="MassIVE" id="Q9Y608"/>
<dbReference type="PaxDb" id="9606-ENSP00000338727"/>
<dbReference type="PeptideAtlas" id="Q9Y608"/>
<dbReference type="ProteomicsDB" id="2344"/>
<dbReference type="ProteomicsDB" id="86571">
    <molecule id="Q9Y608-1"/>
</dbReference>
<dbReference type="ProteomicsDB" id="86572">
    <molecule id="Q9Y608-2"/>
</dbReference>
<dbReference type="ProteomicsDB" id="86573">
    <molecule id="Q9Y608-3"/>
</dbReference>
<dbReference type="ProteomicsDB" id="86574">
    <molecule id="Q9Y608-4"/>
</dbReference>
<dbReference type="Pumba" id="Q9Y608"/>
<dbReference type="Antibodypedia" id="28249">
    <property type="antibodies" value="186 antibodies from 26 providers"/>
</dbReference>
<dbReference type="DNASU" id="9209"/>
<dbReference type="Ensembl" id="ENST00000336686.9">
    <molecule id="Q9Y608-1"/>
    <property type="protein sequence ID" value="ENSP00000338727.4"/>
    <property type="gene ID" value="ENSG00000093167.18"/>
</dbReference>
<dbReference type="Ensembl" id="ENST00000354379.8">
    <molecule id="Q9Y608-2"/>
    <property type="protein sequence ID" value="ENSP00000346349.4"/>
    <property type="gene ID" value="ENSG00000093167.18"/>
</dbReference>
<dbReference type="Ensembl" id="ENST00000396428.6">
    <molecule id="Q9Y608-5"/>
    <property type="protein sequence ID" value="ENSP00000379705.2"/>
    <property type="gene ID" value="ENSG00000093167.18"/>
</dbReference>
<dbReference type="Ensembl" id="ENST00000421276.6">
    <molecule id="Q9Y608-4"/>
    <property type="protein sequence ID" value="ENSP00000416364.2"/>
    <property type="gene ID" value="ENSG00000093167.18"/>
</dbReference>
<dbReference type="Ensembl" id="ENST00000440230.5">
    <molecule id="Q9Y608-4"/>
    <property type="protein sequence ID" value="ENSP00000405480.1"/>
    <property type="gene ID" value="ENSG00000093167.18"/>
</dbReference>
<dbReference type="GeneID" id="9209"/>
<dbReference type="KEGG" id="hsa:9209"/>
<dbReference type="MANE-Select" id="ENST00000336686.9">
    <property type="protein sequence ID" value="ENSP00000338727.4"/>
    <property type="RefSeq nucleotide sequence ID" value="NM_006309.4"/>
    <property type="RefSeq protein sequence ID" value="NP_006300.1"/>
</dbReference>
<dbReference type="UCSC" id="uc003cgs.4">
    <molecule id="Q9Y608-1"/>
    <property type="organism name" value="human"/>
</dbReference>
<dbReference type="AGR" id="HGNC:6703"/>
<dbReference type="CTD" id="9209"/>
<dbReference type="DisGeNET" id="9209"/>
<dbReference type="GeneCards" id="LRRFIP2"/>
<dbReference type="HGNC" id="HGNC:6703">
    <property type="gene designation" value="LRRFIP2"/>
</dbReference>
<dbReference type="HPA" id="ENSG00000093167">
    <property type="expression patterns" value="Low tissue specificity"/>
</dbReference>
<dbReference type="MalaCards" id="LRRFIP2"/>
<dbReference type="MIM" id="614043">
    <property type="type" value="gene"/>
</dbReference>
<dbReference type="neXtProt" id="NX_Q9Y608"/>
<dbReference type="OpenTargets" id="ENSG00000093167"/>
<dbReference type="PharmGKB" id="PA30466"/>
<dbReference type="VEuPathDB" id="HostDB:ENSG00000093167"/>
<dbReference type="eggNOG" id="KOG2010">
    <property type="taxonomic scope" value="Eukaryota"/>
</dbReference>
<dbReference type="GeneTree" id="ENSGT00530000063564"/>
<dbReference type="HOGENOM" id="CLU_018871_2_0_1"/>
<dbReference type="InParanoid" id="Q9Y608"/>
<dbReference type="OMA" id="GNVIRME"/>
<dbReference type="OrthoDB" id="10028421at2759"/>
<dbReference type="PAN-GO" id="Q9Y608">
    <property type="GO annotations" value="0 GO annotations based on evolutionary models"/>
</dbReference>
<dbReference type="PhylomeDB" id="Q9Y608"/>
<dbReference type="TreeFam" id="TF314109"/>
<dbReference type="PathwayCommons" id="Q9Y608"/>
<dbReference type="SignaLink" id="Q9Y608"/>
<dbReference type="SIGNOR" id="Q9Y608"/>
<dbReference type="BioGRID-ORCS" id="9209">
    <property type="hits" value="14 hits in 1154 CRISPR screens"/>
</dbReference>
<dbReference type="ChiTaRS" id="LRRFIP2">
    <property type="organism name" value="human"/>
</dbReference>
<dbReference type="GenomeRNAi" id="9209"/>
<dbReference type="Pharos" id="Q9Y608">
    <property type="development level" value="Tbio"/>
</dbReference>
<dbReference type="PRO" id="PR:Q9Y608"/>
<dbReference type="Proteomes" id="UP000005640">
    <property type="component" value="Chromosome 3"/>
</dbReference>
<dbReference type="RNAct" id="Q9Y608">
    <property type="molecule type" value="protein"/>
</dbReference>
<dbReference type="Bgee" id="ENSG00000093167">
    <property type="expression patterns" value="Expressed in buccal mucosa cell and 199 other cell types or tissues"/>
</dbReference>
<dbReference type="ExpressionAtlas" id="Q9Y608">
    <property type="expression patterns" value="baseline and differential"/>
</dbReference>
<dbReference type="GO" id="GO:0030275">
    <property type="term" value="F:LRR domain binding"/>
    <property type="evidence" value="ECO:0000353"/>
    <property type="project" value="UniProtKB"/>
</dbReference>
<dbReference type="GO" id="GO:0006355">
    <property type="term" value="P:regulation of DNA-templated transcription"/>
    <property type="evidence" value="ECO:0007669"/>
    <property type="project" value="InterPro"/>
</dbReference>
<dbReference type="GO" id="GO:0016055">
    <property type="term" value="P:Wnt signaling pathway"/>
    <property type="evidence" value="ECO:0007669"/>
    <property type="project" value="UniProtKB-KW"/>
</dbReference>
<dbReference type="FunFam" id="1.20.5.4090:FF:000001">
    <property type="entry name" value="leucine-rich repeat flightless-interacting protein 2 isoform X1"/>
    <property type="match status" value="1"/>
</dbReference>
<dbReference type="Gene3D" id="1.20.5.4090">
    <property type="match status" value="1"/>
</dbReference>
<dbReference type="InterPro" id="IPR019139">
    <property type="entry name" value="LRRFIP1/2"/>
</dbReference>
<dbReference type="PANTHER" id="PTHR19212">
    <property type="entry name" value="LEUCINE RICH REPEAT IN FLII INTERACTING PROTEIN"/>
    <property type="match status" value="1"/>
</dbReference>
<dbReference type="PANTHER" id="PTHR19212:SF6">
    <property type="entry name" value="LEUCINE-RICH REPEAT FLIGHTLESS-INTERACTING PROTEIN 2"/>
    <property type="match status" value="1"/>
</dbReference>
<dbReference type="Pfam" id="PF09738">
    <property type="entry name" value="LRRFIP"/>
    <property type="match status" value="3"/>
</dbReference>
<feature type="chain" id="PRO_0000245246" description="Leucine-rich repeat flightless-interacting protein 2">
    <location>
        <begin position="1"/>
        <end position="721"/>
    </location>
</feature>
<feature type="region of interest" description="DVL3-binding">
    <location>
        <begin position="1"/>
        <end position="370"/>
    </location>
</feature>
<feature type="region of interest" description="Disordered" evidence="3">
    <location>
        <begin position="232"/>
        <end position="262"/>
    </location>
</feature>
<feature type="region of interest" description="Disordered" evidence="3">
    <location>
        <begin position="295"/>
        <end position="338"/>
    </location>
</feature>
<feature type="coiled-coil region" evidence="2">
    <location>
        <begin position="22"/>
        <end position="49"/>
    </location>
</feature>
<feature type="coiled-coil region" evidence="2">
    <location>
        <begin position="349"/>
        <end position="524"/>
    </location>
</feature>
<feature type="coiled-coil region" evidence="2">
    <location>
        <begin position="566"/>
        <end position="714"/>
    </location>
</feature>
<feature type="compositionally biased region" description="Polar residues" evidence="3">
    <location>
        <begin position="237"/>
        <end position="251"/>
    </location>
</feature>
<feature type="compositionally biased region" description="Polar residues" evidence="3">
    <location>
        <begin position="305"/>
        <end position="338"/>
    </location>
</feature>
<feature type="modified residue" description="Phosphoserine" evidence="17">
    <location>
        <position position="18"/>
    </location>
</feature>
<feature type="modified residue" description="Phosphoserine" evidence="7">
    <location>
        <position position="190"/>
    </location>
</feature>
<feature type="modified residue" description="Phosphoserine" evidence="7">
    <location>
        <position position="202"/>
    </location>
</feature>
<feature type="modified residue" description="Phosphoserine" evidence="19">
    <location>
        <position position="309"/>
    </location>
</feature>
<feature type="modified residue" description="Phosphoserine" evidence="20">
    <location>
        <position position="312"/>
    </location>
</feature>
<feature type="modified residue" description="Phosphoserine" evidence="16 18 19">
    <location>
        <position position="320"/>
    </location>
</feature>
<feature type="modified residue" description="Phosphoserine" evidence="16 19 20">
    <location>
        <position position="324"/>
    </location>
</feature>
<feature type="modified residue" description="Phosphoserine" evidence="12 13 14 15 16 17 19 20">
    <location>
        <position position="328"/>
    </location>
</feature>
<feature type="modified residue" description="Phosphothreonine" evidence="1">
    <location>
        <position position="331"/>
    </location>
</feature>
<feature type="modified residue" description="Phosphoserine" evidence="1">
    <location>
        <position position="332"/>
    </location>
</feature>
<feature type="modified residue" description="Phosphoserine" evidence="1">
    <location>
        <position position="333"/>
    </location>
</feature>
<feature type="splice variant" id="VSP_019674" description="In isoform 3." evidence="10">
    <location>
        <begin position="1"/>
        <end position="621"/>
    </location>
</feature>
<feature type="splice variant" id="VSP_019675" description="In isoform 2 and isoform 4." evidence="8 9">
    <location>
        <begin position="60"/>
        <end position="291"/>
    </location>
</feature>
<feature type="splice variant" id="VSP_056969" description="In isoform 5." evidence="8">
    <location>
        <begin position="60"/>
        <end position="76"/>
    </location>
</feature>
<feature type="splice variant" id="VSP_056970" description="In isoform 5." evidence="8">
    <location>
        <begin position="111"/>
        <end position="124"/>
    </location>
</feature>
<feature type="splice variant" id="VSP_056971" description="In isoform 5." evidence="8">
    <location>
        <begin position="146"/>
        <end position="202"/>
    </location>
</feature>
<feature type="splice variant" id="VSP_056972" description="In isoform 5." evidence="8">
    <location>
        <begin position="220"/>
        <end position="291"/>
    </location>
</feature>
<feature type="splice variant" id="VSP_019676" description="In isoform 2 and isoform 5." evidence="8 9">
    <location>
        <begin position="346"/>
        <end position="369"/>
    </location>
</feature>
<feature type="splice variant" id="VSP_019677" description="In isoform 2 and isoform 4." evidence="8 9">
    <location>
        <begin position="457"/>
        <end position="521"/>
    </location>
</feature>
<feature type="splice variant" id="VSP_056973" description="In isoform 5." evidence="8">
    <location>
        <begin position="489"/>
        <end position="522"/>
    </location>
</feature>
<feature type="sequence variant" id="VAR_050001" description="In dbSNP:rs34902788.">
    <original>K</original>
    <variation>E</variation>
    <location>
        <position position="143"/>
    </location>
</feature>
<feature type="mutagenesis site" description="No change in LPS-induced NFKB activity." evidence="7">
    <original>S</original>
    <variation>A</variation>
    <location>
        <position position="190"/>
    </location>
</feature>
<feature type="mutagenesis site" description="No change in LPS-induced NFKB activity." evidence="7">
    <original>S</original>
    <variation>A</variation>
    <location>
        <position position="200"/>
    </location>
</feature>
<feature type="mutagenesis site" description="Reduction in LPS-induced NFKB activity." evidence="7">
    <original>S</original>
    <variation>A</variation>
    <location>
        <position position="202"/>
    </location>
</feature>
<feature type="mutagenesis site" description="No change in LPS-induced NFKB activity. Interacts with MYD88 in an LPS-inducible manner." evidence="7">
    <original>S</original>
    <variation>E</variation>
    <location>
        <position position="202"/>
    </location>
</feature>
<feature type="modified residue" description="Phosphoserine" evidence="12 15 18">
    <location sequence="Q9Y608-2">
        <position position="96"/>
    </location>
</feature>
<feature type="modified residue" description="Phosphoserine" evidence="20">
    <location sequence="Q9Y608-2">
        <position position="101"/>
    </location>
</feature>
<feature type="modified residue" description="Phosphoserine" evidence="12 15 18">
    <location sequence="Q9Y608-5">
        <position position="168"/>
    </location>
</feature>
<feature type="modified residue" description="Phosphoserine" evidence="20">
    <location sequence="Q9Y608-5">
        <position position="173"/>
    </location>
</feature>
<organism>
    <name type="scientific">Homo sapiens</name>
    <name type="common">Human</name>
    <dbReference type="NCBI Taxonomy" id="9606"/>
    <lineage>
        <taxon>Eukaryota</taxon>
        <taxon>Metazoa</taxon>
        <taxon>Chordata</taxon>
        <taxon>Craniata</taxon>
        <taxon>Vertebrata</taxon>
        <taxon>Euteleostomi</taxon>
        <taxon>Mammalia</taxon>
        <taxon>Eutheria</taxon>
        <taxon>Euarchontoglires</taxon>
        <taxon>Primates</taxon>
        <taxon>Haplorrhini</taxon>
        <taxon>Catarrhini</taxon>
        <taxon>Hominidae</taxon>
        <taxon>Homo</taxon>
    </lineage>
</organism>
<sequence>MGTPASGRKRTPVKDRFSAEDEALSNIAREAEARLAAKRAARAEARDIRMRELERQQKEYSLHSFDRKWGQIQKWLEDSERARYSHRSSHHRPYLGVEDALSIRSVGSHRYDMFKDRSSRLSSLNHSYSHSHGMKKRSSDSHKDLLSGLYFDQRNYSSLRHSKPTSAYYTRQSSSLYSDPLATYKSDRASPTANSGLLRSASLASLYNGGLYNPYGPRTPSECSYYSSRISSARSSPGFTNDDTASIVSSDRASRGRRESVVSAADYFSRSNRRGSVVSEVDDISIPDLSSLDEKSDKQYAENYTRPSSRNSASATTPLSGNSSRRGSGDTSSLIDPDTSLSELRDIYDLKDQIQDVEGRYMQGLKELKESLSEVEEKYKKAMVSNAQLDNEKNNLIYQVDTLKDVIEEQEEQMAEFYRENEEKSKELERQKHMCSVLQHKMEELKEGLRQRDELIEEKQRMQQKIDTMTKEVFDLQETLLWKDKKIGALEKQKEYIACLRNERDMLREELADLQETVKTGEKHGLVIIPDGTPNGDVSHEPVAGAITVVSQEAAQVLESAGEGPLDVRLRKLAGEKEELLSQIRKLKLQLEEERQKCSRNDGTVGDLAGLQNGSDLQFIEMQRDANRQISEYKFKLSKAEQDITTLEQSISRLEGQVLRYKTAAENAEKVEDELKAEKRKLQRELRTALDKIEEMEMTNSHLAKRLEKMKANRTALLAQQ</sequence>
<name>LRRF2_HUMAN</name>
<accession>Q9Y608</accession>
<accession>A8K649</accession>
<accession>A8MXR0</accession>
<accession>B4DY63</accession>
<accession>Q68CV3</accession>
<accession>Q9NXH5</accession>
<protein>
    <recommendedName>
        <fullName>Leucine-rich repeat flightless-interacting protein 2</fullName>
        <shortName>LRR FLII-interacting protein 2</shortName>
    </recommendedName>
</protein>
<comment type="function">
    <text evidence="5 6">May function as activator of the canonical Wnt signaling pathway, in association with DVL3, upstream of CTNNB1/beta-catenin. Positively regulates Toll-like receptor (TLR) signaling in response to agonist probably by competing with the negative FLII regulator for MYD88-binding.</text>
</comment>
<comment type="subunit">
    <text evidence="4 5 6">Interacts (via N-terminus) with DVL3. Interacts with FLII. Weakly interacts with MYD88 in resting cells. Following LPS-stimulation, the interaction with MYD88 is rapidly enhanced; the complex gradually dissociates to basal levels after 6 hours of stimulation. Interaction with MYD88 is regulated by LPS-induced phosphorylation at Ser-202. In the presence of LPS, competes with FLII for MYD88-binding.</text>
</comment>
<comment type="interaction">
    <interactant intactId="EBI-1023718">
        <id>Q9Y608</id>
    </interactant>
    <interactant intactId="EBI-1166928">
        <id>Q8N5M1</id>
        <label>ATPAF2</label>
    </interactant>
    <organismsDiffer>false</organismsDiffer>
    <experiments>4</experiments>
</comment>
<comment type="interaction">
    <interactant intactId="EBI-1023718">
        <id>Q9Y608</id>
    </interactant>
    <interactant intactId="EBI-739789">
        <id>Q92997</id>
        <label>DVL3</label>
    </interactant>
    <organismsDiffer>false</organismsDiffer>
    <experiments>2</experiments>
</comment>
<comment type="interaction">
    <interactant intactId="EBI-1023718">
        <id>Q9Y608</id>
    </interactant>
    <interactant intactId="EBI-351549">
        <id>Q13045</id>
        <label>FLII</label>
    </interactant>
    <organismsDiffer>false</organismsDiffer>
    <experiments>4</experiments>
</comment>
<comment type="interaction">
    <interactant intactId="EBI-12696250">
        <id>Q9Y608-2</id>
    </interactant>
    <interactant intactId="EBI-1166928">
        <id>Q8N5M1</id>
        <label>ATPAF2</label>
    </interactant>
    <organismsDiffer>false</organismsDiffer>
    <experiments>3</experiments>
</comment>
<comment type="alternative products">
    <event type="alternative splicing"/>
    <isoform>
        <id>Q9Y608-1</id>
        <name>1</name>
        <sequence type="displayed"/>
    </isoform>
    <isoform>
        <id>Q9Y608-2</id>
        <name>2</name>
        <sequence type="described" ref="VSP_019675 VSP_019676 VSP_019677"/>
    </isoform>
    <isoform>
        <id>Q9Y608-3</id>
        <name>3</name>
        <sequence type="described" ref="VSP_019674"/>
    </isoform>
    <isoform>
        <id>Q9Y608-4</id>
        <name>4</name>
        <sequence type="described" ref="VSP_019675 VSP_019677"/>
    </isoform>
    <isoform>
        <id>Q9Y608-5</id>
        <name>5</name>
        <sequence type="described" ref="VSP_056969 VSP_056970 VSP_056971 VSP_056972 VSP_019676 VSP_056973"/>
    </isoform>
</comment>
<comment type="tissue specificity">
    <text evidence="4">Widely expressed, with highest levels in heart and skeletal muscle.</text>
</comment>
<comment type="PTM">
    <text evidence="7">Ser-190 and Ser-202 are phosphorylated in response to LPS stimulation. Ser-202 phosphorylation regulates the LPS-induced interaction with MYD88.</text>
</comment>
<comment type="similarity">
    <text evidence="11">Belongs to the LRRFIP family.</text>
</comment>
<reference key="1">
    <citation type="journal article" date="1999" name="Genomics">
        <title>Novel proteins interacting with the leucine-rich repeat domain of human flightless-I identified by the yeast two-hybrid system.</title>
        <authorList>
            <person name="Fong K.S.K."/>
            <person name="de Couet H.G."/>
        </authorList>
    </citation>
    <scope>NUCLEOTIDE SEQUENCE [MRNA] (ISOFORM 1)</scope>
    <scope>REGION</scope>
    <scope>TISSUE SPECIFICITY</scope>
    <scope>INTERACTION WITH FLII</scope>
    <source>
        <tissue>Skeletal muscle</tissue>
    </source>
</reference>
<reference key="2">
    <citation type="journal article" date="2004" name="Nat. Genet.">
        <title>Complete sequencing and characterization of 21,243 full-length human cDNAs.</title>
        <authorList>
            <person name="Ota T."/>
            <person name="Suzuki Y."/>
            <person name="Nishikawa T."/>
            <person name="Otsuki T."/>
            <person name="Sugiyama T."/>
            <person name="Irie R."/>
            <person name="Wakamatsu A."/>
            <person name="Hayashi K."/>
            <person name="Sato H."/>
            <person name="Nagai K."/>
            <person name="Kimura K."/>
            <person name="Makita H."/>
            <person name="Sekine M."/>
            <person name="Obayashi M."/>
            <person name="Nishi T."/>
            <person name="Shibahara T."/>
            <person name="Tanaka T."/>
            <person name="Ishii S."/>
            <person name="Yamamoto J."/>
            <person name="Saito K."/>
            <person name="Kawai Y."/>
            <person name="Isono Y."/>
            <person name="Nakamura Y."/>
            <person name="Nagahari K."/>
            <person name="Murakami K."/>
            <person name="Yasuda T."/>
            <person name="Iwayanagi T."/>
            <person name="Wagatsuma M."/>
            <person name="Shiratori A."/>
            <person name="Sudo H."/>
            <person name="Hosoiri T."/>
            <person name="Kaku Y."/>
            <person name="Kodaira H."/>
            <person name="Kondo H."/>
            <person name="Sugawara M."/>
            <person name="Takahashi M."/>
            <person name="Kanda K."/>
            <person name="Yokoi T."/>
            <person name="Furuya T."/>
            <person name="Kikkawa E."/>
            <person name="Omura Y."/>
            <person name="Abe K."/>
            <person name="Kamihara K."/>
            <person name="Katsuta N."/>
            <person name="Sato K."/>
            <person name="Tanikawa M."/>
            <person name="Yamazaki M."/>
            <person name="Ninomiya K."/>
            <person name="Ishibashi T."/>
            <person name="Yamashita H."/>
            <person name="Murakawa K."/>
            <person name="Fujimori K."/>
            <person name="Tanai H."/>
            <person name="Kimata M."/>
            <person name="Watanabe M."/>
            <person name="Hiraoka S."/>
            <person name="Chiba Y."/>
            <person name="Ishida S."/>
            <person name="Ono Y."/>
            <person name="Takiguchi S."/>
            <person name="Watanabe S."/>
            <person name="Yosida M."/>
            <person name="Hotuta T."/>
            <person name="Kusano J."/>
            <person name="Kanehori K."/>
            <person name="Takahashi-Fujii A."/>
            <person name="Hara H."/>
            <person name="Tanase T.-O."/>
            <person name="Nomura Y."/>
            <person name="Togiya S."/>
            <person name="Komai F."/>
            <person name="Hara R."/>
            <person name="Takeuchi K."/>
            <person name="Arita M."/>
            <person name="Imose N."/>
            <person name="Musashino K."/>
            <person name="Yuuki H."/>
            <person name="Oshima A."/>
            <person name="Sasaki N."/>
            <person name="Aotsuka S."/>
            <person name="Yoshikawa Y."/>
            <person name="Matsunawa H."/>
            <person name="Ichihara T."/>
            <person name="Shiohata N."/>
            <person name="Sano S."/>
            <person name="Moriya S."/>
            <person name="Momiyama H."/>
            <person name="Satoh N."/>
            <person name="Takami S."/>
            <person name="Terashima Y."/>
            <person name="Suzuki O."/>
            <person name="Nakagawa S."/>
            <person name="Senoh A."/>
            <person name="Mizoguchi H."/>
            <person name="Goto Y."/>
            <person name="Shimizu F."/>
            <person name="Wakebe H."/>
            <person name="Hishigaki H."/>
            <person name="Watanabe T."/>
            <person name="Sugiyama A."/>
            <person name="Takemoto M."/>
            <person name="Kawakami B."/>
            <person name="Yamazaki M."/>
            <person name="Watanabe K."/>
            <person name="Kumagai A."/>
            <person name="Itakura S."/>
            <person name="Fukuzumi Y."/>
            <person name="Fujimori Y."/>
            <person name="Komiyama M."/>
            <person name="Tashiro H."/>
            <person name="Tanigami A."/>
            <person name="Fujiwara T."/>
            <person name="Ono T."/>
            <person name="Yamada K."/>
            <person name="Fujii Y."/>
            <person name="Ozaki K."/>
            <person name="Hirao M."/>
            <person name="Ohmori Y."/>
            <person name="Kawabata A."/>
            <person name="Hikiji T."/>
            <person name="Kobatake N."/>
            <person name="Inagaki H."/>
            <person name="Ikema Y."/>
            <person name="Okamoto S."/>
            <person name="Okitani R."/>
            <person name="Kawakami T."/>
            <person name="Noguchi S."/>
            <person name="Itoh T."/>
            <person name="Shigeta K."/>
            <person name="Senba T."/>
            <person name="Matsumura K."/>
            <person name="Nakajima Y."/>
            <person name="Mizuno T."/>
            <person name="Morinaga M."/>
            <person name="Sasaki M."/>
            <person name="Togashi T."/>
            <person name="Oyama M."/>
            <person name="Hata H."/>
            <person name="Watanabe M."/>
            <person name="Komatsu T."/>
            <person name="Mizushima-Sugano J."/>
            <person name="Satoh T."/>
            <person name="Shirai Y."/>
            <person name="Takahashi Y."/>
            <person name="Nakagawa K."/>
            <person name="Okumura K."/>
            <person name="Nagase T."/>
            <person name="Nomura N."/>
            <person name="Kikuchi H."/>
            <person name="Masuho Y."/>
            <person name="Yamashita R."/>
            <person name="Nakai K."/>
            <person name="Yada T."/>
            <person name="Nakamura Y."/>
            <person name="Ohara O."/>
            <person name="Isogai T."/>
            <person name="Sugano S."/>
        </authorList>
    </citation>
    <scope>NUCLEOTIDE SEQUENCE [LARGE SCALE MRNA] (ISOFORMS 2; 4 AND 5)</scope>
    <source>
        <tissue>Colon mucosa</tissue>
        <tissue>Testis</tissue>
    </source>
</reference>
<reference key="3">
    <citation type="journal article" date="2007" name="BMC Genomics">
        <title>The full-ORF clone resource of the German cDNA consortium.</title>
        <authorList>
            <person name="Bechtel S."/>
            <person name="Rosenfelder H."/>
            <person name="Duda A."/>
            <person name="Schmidt C.P."/>
            <person name="Ernst U."/>
            <person name="Wellenreuther R."/>
            <person name="Mehrle A."/>
            <person name="Schuster C."/>
            <person name="Bahr A."/>
            <person name="Bloecker H."/>
            <person name="Heubner D."/>
            <person name="Hoerlein A."/>
            <person name="Michel G."/>
            <person name="Wedler H."/>
            <person name="Koehrer K."/>
            <person name="Ottenwaelder B."/>
            <person name="Poustka A."/>
            <person name="Wiemann S."/>
            <person name="Schupp I."/>
        </authorList>
    </citation>
    <scope>NUCLEOTIDE SEQUENCE [LARGE SCALE MRNA] (ISOFORM 3)</scope>
    <source>
        <tissue>Testis</tissue>
    </source>
</reference>
<reference key="4">
    <citation type="journal article" date="2006" name="Nature">
        <title>The DNA sequence, annotation and analysis of human chromosome 3.</title>
        <authorList>
            <person name="Muzny D.M."/>
            <person name="Scherer S.E."/>
            <person name="Kaul R."/>
            <person name="Wang J."/>
            <person name="Yu J."/>
            <person name="Sudbrak R."/>
            <person name="Buhay C.J."/>
            <person name="Chen R."/>
            <person name="Cree A."/>
            <person name="Ding Y."/>
            <person name="Dugan-Rocha S."/>
            <person name="Gill R."/>
            <person name="Gunaratne P."/>
            <person name="Harris R.A."/>
            <person name="Hawes A.C."/>
            <person name="Hernandez J."/>
            <person name="Hodgson A.V."/>
            <person name="Hume J."/>
            <person name="Jackson A."/>
            <person name="Khan Z.M."/>
            <person name="Kovar-Smith C."/>
            <person name="Lewis L.R."/>
            <person name="Lozado R.J."/>
            <person name="Metzker M.L."/>
            <person name="Milosavljevic A."/>
            <person name="Miner G.R."/>
            <person name="Morgan M.B."/>
            <person name="Nazareth L.V."/>
            <person name="Scott G."/>
            <person name="Sodergren E."/>
            <person name="Song X.-Z."/>
            <person name="Steffen D."/>
            <person name="Wei S."/>
            <person name="Wheeler D.A."/>
            <person name="Wright M.W."/>
            <person name="Worley K.C."/>
            <person name="Yuan Y."/>
            <person name="Zhang Z."/>
            <person name="Adams C.Q."/>
            <person name="Ansari-Lari M.A."/>
            <person name="Ayele M."/>
            <person name="Brown M.J."/>
            <person name="Chen G."/>
            <person name="Chen Z."/>
            <person name="Clendenning J."/>
            <person name="Clerc-Blankenburg K.P."/>
            <person name="Chen R."/>
            <person name="Chen Z."/>
            <person name="Davis C."/>
            <person name="Delgado O."/>
            <person name="Dinh H.H."/>
            <person name="Dong W."/>
            <person name="Draper H."/>
            <person name="Ernst S."/>
            <person name="Fu G."/>
            <person name="Gonzalez-Garay M.L."/>
            <person name="Garcia D.K."/>
            <person name="Gillett W."/>
            <person name="Gu J."/>
            <person name="Hao B."/>
            <person name="Haugen E."/>
            <person name="Havlak P."/>
            <person name="He X."/>
            <person name="Hennig S."/>
            <person name="Hu S."/>
            <person name="Huang W."/>
            <person name="Jackson L.R."/>
            <person name="Jacob L.S."/>
            <person name="Kelly S.H."/>
            <person name="Kube M."/>
            <person name="Levy R."/>
            <person name="Li Z."/>
            <person name="Liu B."/>
            <person name="Liu J."/>
            <person name="Liu W."/>
            <person name="Lu J."/>
            <person name="Maheshwari M."/>
            <person name="Nguyen B.-V."/>
            <person name="Okwuonu G.O."/>
            <person name="Palmeiri A."/>
            <person name="Pasternak S."/>
            <person name="Perez L.M."/>
            <person name="Phelps K.A."/>
            <person name="Plopper F.J."/>
            <person name="Qiang B."/>
            <person name="Raymond C."/>
            <person name="Rodriguez R."/>
            <person name="Saenphimmachak C."/>
            <person name="Santibanez J."/>
            <person name="Shen H."/>
            <person name="Shen Y."/>
            <person name="Subramanian S."/>
            <person name="Tabor P.E."/>
            <person name="Verduzco D."/>
            <person name="Waldron L."/>
            <person name="Wang J."/>
            <person name="Wang J."/>
            <person name="Wang Q."/>
            <person name="Williams G.A."/>
            <person name="Wong G.K.-S."/>
            <person name="Yao Z."/>
            <person name="Zhang J."/>
            <person name="Zhang X."/>
            <person name="Zhao G."/>
            <person name="Zhou J."/>
            <person name="Zhou Y."/>
            <person name="Nelson D."/>
            <person name="Lehrach H."/>
            <person name="Reinhardt R."/>
            <person name="Naylor S.L."/>
            <person name="Yang H."/>
            <person name="Olson M."/>
            <person name="Weinstock G."/>
            <person name="Gibbs R.A."/>
        </authorList>
    </citation>
    <scope>NUCLEOTIDE SEQUENCE [LARGE SCALE GENOMIC DNA]</scope>
</reference>
<reference key="5">
    <citation type="journal article" date="2004" name="Genome Res.">
        <title>The status, quality, and expansion of the NIH full-length cDNA project: the Mammalian Gene Collection (MGC).</title>
        <authorList>
            <consortium name="The MGC Project Team"/>
        </authorList>
    </citation>
    <scope>NUCLEOTIDE SEQUENCE [LARGE SCALE MRNA] (ISOFORM 2)</scope>
    <source>
        <tissue>Skin</tissue>
    </source>
</reference>
<reference key="6">
    <citation type="journal article" date="2011" name="J. Biol. Chem.">
        <title>Unambiguous characterization of site-specific phosphorylation of leucine-rich repeat Fli-I-interacting protein 2 (LRRFIP2) in Toll-like receptor 4 (TLR4)-mediated signaling.</title>
        <authorList>
            <person name="Gunawardena H.P."/>
            <person name="Huang Y."/>
            <person name="Kenjale R."/>
            <person name="Wang H."/>
            <person name="Xie L."/>
            <person name="Chen X."/>
        </authorList>
    </citation>
    <scope>PROTEIN SEQUENCE OF 186-218 AND 326-345</scope>
    <scope>PHOSPHORYLATION AT SER-190 AND SER-202</scope>
    <scope>MUTAGENESIS OF SER-190; SER-200 AND SER-202</scope>
    <scope>IDENTIFICATION BY MASS SPECTROMETRY</scope>
</reference>
<reference key="7">
    <citation type="journal article" date="2005" name="Proc. Natl. Acad. Sci. U.S.A.">
        <title>Identification of the Wnt signaling activator leucine-rich repeat in Flightless interaction protein 2 by a genome-wide functional analysis.</title>
        <authorList>
            <person name="Liu J."/>
            <person name="Bang A.G."/>
            <person name="Kintner C."/>
            <person name="Orth A.P."/>
            <person name="Chanda S.K."/>
            <person name="Ding S."/>
            <person name="Schultz P.G."/>
        </authorList>
    </citation>
    <scope>FUNCTION</scope>
    <scope>INTERACTION WITH DVL3</scope>
</reference>
<reference key="8">
    <citation type="journal article" date="2006" name="Cell">
        <title>Global, in vivo, and site-specific phosphorylation dynamics in signaling networks.</title>
        <authorList>
            <person name="Olsen J.V."/>
            <person name="Blagoev B."/>
            <person name="Gnad F."/>
            <person name="Macek B."/>
            <person name="Kumar C."/>
            <person name="Mortensen P."/>
            <person name="Mann M."/>
        </authorList>
    </citation>
    <scope>PHOSPHORYLATION [LARGE SCALE ANALYSIS] AT SER-328</scope>
    <scope>PHOSPHORYLATION [LARGE SCALE ANALYSIS] AT SER-96 (ISOFORM 2)</scope>
    <scope>PHOSPHORYLATION [LARGE SCALE ANALYSIS] AT SER-168 (ISOFORM 5)</scope>
    <scope>IDENTIFICATION BY MASS SPECTROMETRY [LARGE SCALE ANALYSIS]</scope>
    <source>
        <tissue>Cervix carcinoma</tissue>
    </source>
</reference>
<reference key="9">
    <citation type="journal article" date="2007" name="Mol. Cell. Proteomics">
        <title>Quantitative phosphoproteome profiling of Wnt3a-mediated signaling network: indicating the involvement of ribonucleoside-diphosphate reductase M2 subunit phosphorylation at residue serine 20 in canonical Wnt signal transduction.</title>
        <authorList>
            <person name="Tang L.-Y."/>
            <person name="Deng N."/>
            <person name="Wang L.-S."/>
            <person name="Dai J."/>
            <person name="Wang Z.-L."/>
            <person name="Jiang X.-S."/>
            <person name="Li S.-J."/>
            <person name="Li L."/>
            <person name="Sheng Q.-H."/>
            <person name="Wu D.-Q."/>
            <person name="Li L."/>
            <person name="Zeng R."/>
        </authorList>
    </citation>
    <scope>PHOSPHORYLATION [LARGE SCALE ANALYSIS] AT SER-328</scope>
    <scope>IDENTIFICATION BY MASS SPECTROMETRY [LARGE SCALE ANALYSIS]</scope>
    <source>
        <tissue>Embryonic kidney</tissue>
    </source>
</reference>
<reference key="10">
    <citation type="journal article" date="2008" name="J. Proteome Res.">
        <title>Combining protein-based IMAC, peptide-based IMAC, and MudPIT for efficient phosphoproteomic analysis.</title>
        <authorList>
            <person name="Cantin G.T."/>
            <person name="Yi W."/>
            <person name="Lu B."/>
            <person name="Park S.K."/>
            <person name="Xu T."/>
            <person name="Lee J.-D."/>
            <person name="Yates J.R. III"/>
        </authorList>
    </citation>
    <scope>PHOSPHORYLATION [LARGE SCALE ANALYSIS] AT SER-328</scope>
    <scope>IDENTIFICATION BY MASS SPECTROMETRY [LARGE SCALE ANALYSIS]</scope>
    <source>
        <tissue>Cervix carcinoma</tissue>
    </source>
</reference>
<reference key="11">
    <citation type="journal article" date="2008" name="J. Proteome Res.">
        <title>Phosphorylation analysis of primary human T lymphocytes using sequential IMAC and titanium oxide enrichment.</title>
        <authorList>
            <person name="Carrascal M."/>
            <person name="Ovelleiro D."/>
            <person name="Casas V."/>
            <person name="Gay M."/>
            <person name="Abian J."/>
        </authorList>
    </citation>
    <scope>IDENTIFICATION BY MASS SPECTROMETRY [LARGE SCALE ANALYSIS]</scope>
    <source>
        <tissue>T-cell</tissue>
    </source>
</reference>
<reference key="12">
    <citation type="journal article" date="2008" name="Proc. Natl. Acad. Sci. U.S.A.">
        <title>A quantitative atlas of mitotic phosphorylation.</title>
        <authorList>
            <person name="Dephoure N."/>
            <person name="Zhou C."/>
            <person name="Villen J."/>
            <person name="Beausoleil S.A."/>
            <person name="Bakalarski C.E."/>
            <person name="Elledge S.J."/>
            <person name="Gygi S.P."/>
        </authorList>
    </citation>
    <scope>PHOSPHORYLATION [LARGE SCALE ANALYSIS] AT SER-328</scope>
    <scope>PHOSPHORYLATION [LARGE SCALE ANALYSIS] AT SER-96 (ISOFORM 2)</scope>
    <scope>PHOSPHORYLATION [LARGE SCALE ANALYSIS] AT SER-168 (ISOFORM 5)</scope>
    <scope>IDENTIFICATION BY MASS SPECTROMETRY [LARGE SCALE ANALYSIS]</scope>
    <source>
        <tissue>Cervix carcinoma</tissue>
    </source>
</reference>
<reference key="13">
    <citation type="journal article" date="2009" name="Anal. Chem.">
        <title>Lys-N and trypsin cover complementary parts of the phosphoproteome in a refined SCX-based approach.</title>
        <authorList>
            <person name="Gauci S."/>
            <person name="Helbig A.O."/>
            <person name="Slijper M."/>
            <person name="Krijgsveld J."/>
            <person name="Heck A.J."/>
            <person name="Mohammed S."/>
        </authorList>
    </citation>
    <scope>IDENTIFICATION BY MASS SPECTROMETRY [LARGE SCALE ANALYSIS]</scope>
</reference>
<reference key="14">
    <citation type="journal article" date="2009" name="J. Immunol.">
        <title>Modulation of TLR signaling by multiple MyD88-interacting partners including leucine-rich repeat Fli-I-interacting proteins.</title>
        <authorList>
            <person name="Dai P."/>
            <person name="Jeong S.Y."/>
            <person name="Yu Y."/>
            <person name="Leng T."/>
            <person name="Wu W."/>
            <person name="Xie L."/>
            <person name="Chen X."/>
        </authorList>
    </citation>
    <scope>FUNCTION</scope>
    <scope>INTERACTION WITH FLII AND MYD88</scope>
</reference>
<reference key="15">
    <citation type="journal article" date="2009" name="Sci. Signal.">
        <title>Quantitative phosphoproteomic analysis of T cell receptor signaling reveals system-wide modulation of protein-protein interactions.</title>
        <authorList>
            <person name="Mayya V."/>
            <person name="Lundgren D.H."/>
            <person name="Hwang S.-I."/>
            <person name="Rezaul K."/>
            <person name="Wu L."/>
            <person name="Eng J.K."/>
            <person name="Rodionov V."/>
            <person name="Han D.K."/>
        </authorList>
    </citation>
    <scope>PHOSPHORYLATION [LARGE SCALE ANALYSIS] AT SER-320; SER-324 AND SER-328</scope>
    <scope>IDENTIFICATION BY MASS SPECTROMETRY [LARGE SCALE ANALYSIS]</scope>
    <source>
        <tissue>Leukemic T-cell</tissue>
    </source>
</reference>
<reference key="16">
    <citation type="journal article" date="2010" name="Sci. Signal.">
        <title>Quantitative phosphoproteomics reveals widespread full phosphorylation site occupancy during mitosis.</title>
        <authorList>
            <person name="Olsen J.V."/>
            <person name="Vermeulen M."/>
            <person name="Santamaria A."/>
            <person name="Kumar C."/>
            <person name="Miller M.L."/>
            <person name="Jensen L.J."/>
            <person name="Gnad F."/>
            <person name="Cox J."/>
            <person name="Jensen T.S."/>
            <person name="Nigg E.A."/>
            <person name="Brunak S."/>
            <person name="Mann M."/>
        </authorList>
    </citation>
    <scope>PHOSPHORYLATION [LARGE SCALE ANALYSIS] AT SER-18 AND SER-328</scope>
    <scope>IDENTIFICATION BY MASS SPECTROMETRY [LARGE SCALE ANALYSIS]</scope>
    <source>
        <tissue>Cervix carcinoma</tissue>
    </source>
</reference>
<reference key="17">
    <citation type="journal article" date="2011" name="BMC Syst. Biol.">
        <title>Initial characterization of the human central proteome.</title>
        <authorList>
            <person name="Burkard T.R."/>
            <person name="Planyavsky M."/>
            <person name="Kaupe I."/>
            <person name="Breitwieser F.P."/>
            <person name="Buerckstuemmer T."/>
            <person name="Bennett K.L."/>
            <person name="Superti-Furga G."/>
            <person name="Colinge J."/>
        </authorList>
    </citation>
    <scope>IDENTIFICATION BY MASS SPECTROMETRY [LARGE SCALE ANALYSIS]</scope>
</reference>
<reference key="18">
    <citation type="journal article" date="2011" name="Sci. Signal.">
        <title>System-wide temporal characterization of the proteome and phosphoproteome of human embryonic stem cell differentiation.</title>
        <authorList>
            <person name="Rigbolt K.T."/>
            <person name="Prokhorova T.A."/>
            <person name="Akimov V."/>
            <person name="Henningsen J."/>
            <person name="Johansen P.T."/>
            <person name="Kratchmarova I."/>
            <person name="Kassem M."/>
            <person name="Mann M."/>
            <person name="Olsen J.V."/>
            <person name="Blagoev B."/>
        </authorList>
    </citation>
    <scope>PHOSPHORYLATION [LARGE SCALE ANALYSIS] AT SER-320</scope>
    <scope>PHOSPHORYLATION [LARGE SCALE ANALYSIS] AT SER-96 (ISOFORM 2)</scope>
    <scope>PHOSPHORYLATION [LARGE SCALE ANALYSIS] AT SER-168 (ISOFORM 5)</scope>
    <scope>IDENTIFICATION BY MASS SPECTROMETRY [LARGE SCALE ANALYSIS]</scope>
</reference>
<reference key="19">
    <citation type="journal article" date="2013" name="J. Proteome Res.">
        <title>Toward a comprehensive characterization of a human cancer cell phosphoproteome.</title>
        <authorList>
            <person name="Zhou H."/>
            <person name="Di Palma S."/>
            <person name="Preisinger C."/>
            <person name="Peng M."/>
            <person name="Polat A.N."/>
            <person name="Heck A.J."/>
            <person name="Mohammed S."/>
        </authorList>
    </citation>
    <scope>PHOSPHORYLATION [LARGE SCALE ANALYSIS] AT SER-309; SER-320; SER-324 AND SER-328</scope>
    <scope>IDENTIFICATION BY MASS SPECTROMETRY [LARGE SCALE ANALYSIS]</scope>
    <source>
        <tissue>Cervix carcinoma</tissue>
        <tissue>Erythroleukemia</tissue>
    </source>
</reference>
<reference key="20">
    <citation type="journal article" date="2014" name="J. Proteomics">
        <title>An enzyme assisted RP-RPLC approach for in-depth analysis of human liver phosphoproteome.</title>
        <authorList>
            <person name="Bian Y."/>
            <person name="Song C."/>
            <person name="Cheng K."/>
            <person name="Dong M."/>
            <person name="Wang F."/>
            <person name="Huang J."/>
            <person name="Sun D."/>
            <person name="Wang L."/>
            <person name="Ye M."/>
            <person name="Zou H."/>
        </authorList>
    </citation>
    <scope>PHOSPHORYLATION [LARGE SCALE ANALYSIS] AT SER-312; SER-324 AND SER-328</scope>
    <scope>PHOSPHORYLATION [LARGE SCALE ANALYSIS] AT SER-101 (ISOFORM 2)</scope>
    <scope>PHOSPHORYLATION [LARGE SCALE ANALYSIS] AT SER-173 (ISOFORM 5)</scope>
    <scope>IDENTIFICATION BY MASS SPECTROMETRY [LARGE SCALE ANALYSIS]</scope>
    <source>
        <tissue>Liver</tissue>
    </source>
</reference>
<keyword id="KW-0025">Alternative splicing</keyword>
<keyword id="KW-0175">Coiled coil</keyword>
<keyword id="KW-0903">Direct protein sequencing</keyword>
<keyword id="KW-0597">Phosphoprotein</keyword>
<keyword id="KW-1267">Proteomics identification</keyword>
<keyword id="KW-1185">Reference proteome</keyword>
<keyword id="KW-0879">Wnt signaling pathway</keyword>
<gene>
    <name type="primary">LRRFIP2</name>
</gene>
<evidence type="ECO:0000250" key="1">
    <source>
        <dbReference type="UniProtKB" id="Q91WK0"/>
    </source>
</evidence>
<evidence type="ECO:0000255" key="2"/>
<evidence type="ECO:0000256" key="3">
    <source>
        <dbReference type="SAM" id="MobiDB-lite"/>
    </source>
</evidence>
<evidence type="ECO:0000269" key="4">
    <source>
    </source>
</evidence>
<evidence type="ECO:0000269" key="5">
    <source>
    </source>
</evidence>
<evidence type="ECO:0000269" key="6">
    <source>
    </source>
</evidence>
<evidence type="ECO:0000269" key="7">
    <source>
    </source>
</evidence>
<evidence type="ECO:0000303" key="8">
    <source>
    </source>
</evidence>
<evidence type="ECO:0000303" key="9">
    <source>
    </source>
</evidence>
<evidence type="ECO:0000303" key="10">
    <source>
    </source>
</evidence>
<evidence type="ECO:0000305" key="11"/>
<evidence type="ECO:0007744" key="12">
    <source>
    </source>
</evidence>
<evidence type="ECO:0007744" key="13">
    <source>
    </source>
</evidence>
<evidence type="ECO:0007744" key="14">
    <source>
    </source>
</evidence>
<evidence type="ECO:0007744" key="15">
    <source>
    </source>
</evidence>
<evidence type="ECO:0007744" key="16">
    <source>
    </source>
</evidence>
<evidence type="ECO:0007744" key="17">
    <source>
    </source>
</evidence>
<evidence type="ECO:0007744" key="18">
    <source>
    </source>
</evidence>
<evidence type="ECO:0007744" key="19">
    <source>
    </source>
</evidence>
<evidence type="ECO:0007744" key="20">
    <source>
    </source>
</evidence>
<proteinExistence type="evidence at protein level"/>